<accession>Q6LWU0</accession>
<protein>
    <recommendedName>
        <fullName evidence="1">Aspartate--tRNA(Asp/Asn) ligase</fullName>
        <ecNumber evidence="1">6.1.1.23</ecNumber>
    </recommendedName>
    <alternativeName>
        <fullName evidence="1">Aspartyl-tRNA synthetase</fullName>
        <shortName evidence="1">AspRS</shortName>
    </alternativeName>
    <alternativeName>
        <fullName evidence="1">Non-discriminating aspartyl-tRNA synthetase</fullName>
        <shortName evidence="1">ND-AspRS</shortName>
    </alternativeName>
</protein>
<feature type="chain" id="PRO_0000110998" description="Aspartate--tRNA(Asp/Asn) ligase">
    <location>
        <begin position="1"/>
        <end position="438"/>
    </location>
</feature>
<feature type="region of interest" description="Aspartate" evidence="1">
    <location>
        <begin position="198"/>
        <end position="201"/>
    </location>
</feature>
<feature type="binding site" evidence="1">
    <location>
        <position position="176"/>
    </location>
    <ligand>
        <name>L-aspartate</name>
        <dbReference type="ChEBI" id="CHEBI:29991"/>
    </ligand>
</feature>
<feature type="binding site" evidence="1">
    <location>
        <begin position="220"/>
        <end position="222"/>
    </location>
    <ligand>
        <name>ATP</name>
        <dbReference type="ChEBI" id="CHEBI:30616"/>
    </ligand>
</feature>
<feature type="binding site" evidence="1">
    <location>
        <position position="220"/>
    </location>
    <ligand>
        <name>L-aspartate</name>
        <dbReference type="ChEBI" id="CHEBI:29991"/>
    </ligand>
</feature>
<feature type="binding site" evidence="1">
    <location>
        <begin position="228"/>
        <end position="230"/>
    </location>
    <ligand>
        <name>ATP</name>
        <dbReference type="ChEBI" id="CHEBI:30616"/>
    </ligand>
</feature>
<feature type="binding site" evidence="1">
    <location>
        <position position="361"/>
    </location>
    <ligand>
        <name>ATP</name>
        <dbReference type="ChEBI" id="CHEBI:30616"/>
    </ligand>
</feature>
<feature type="binding site" evidence="1">
    <location>
        <position position="361"/>
    </location>
    <ligand>
        <name>Mg(2+)</name>
        <dbReference type="ChEBI" id="CHEBI:18420"/>
        <label>2</label>
    </ligand>
</feature>
<feature type="binding site" evidence="1">
    <location>
        <position position="361"/>
    </location>
    <ligand>
        <name>Mg(2+)</name>
        <dbReference type="ChEBI" id="CHEBI:18420"/>
        <label>3</label>
    </ligand>
</feature>
<feature type="binding site" evidence="1">
    <location>
        <position position="364"/>
    </location>
    <ligand>
        <name>L-aspartate</name>
        <dbReference type="ChEBI" id="CHEBI:29991"/>
    </ligand>
</feature>
<feature type="binding site" evidence="1">
    <location>
        <position position="364"/>
    </location>
    <ligand>
        <name>Mg(2+)</name>
        <dbReference type="ChEBI" id="CHEBI:18420"/>
        <label>2</label>
    </ligand>
</feature>
<feature type="binding site" evidence="1">
    <location>
        <position position="368"/>
    </location>
    <ligand>
        <name>L-aspartate</name>
        <dbReference type="ChEBI" id="CHEBI:29991"/>
    </ligand>
</feature>
<feature type="binding site" evidence="1">
    <location>
        <begin position="409"/>
        <end position="412"/>
    </location>
    <ligand>
        <name>ATP</name>
        <dbReference type="ChEBI" id="CHEBI:30616"/>
    </ligand>
</feature>
<feature type="site" description="Important for tRNA non-discrimination" evidence="1">
    <location>
        <position position="91"/>
    </location>
</feature>
<keyword id="KW-0030">Aminoacyl-tRNA synthetase</keyword>
<keyword id="KW-0067">ATP-binding</keyword>
<keyword id="KW-0963">Cytoplasm</keyword>
<keyword id="KW-0436">Ligase</keyword>
<keyword id="KW-0460">Magnesium</keyword>
<keyword id="KW-0479">Metal-binding</keyword>
<keyword id="KW-0547">Nucleotide-binding</keyword>
<keyword id="KW-0648">Protein biosynthesis</keyword>
<keyword id="KW-1185">Reference proteome</keyword>
<proteinExistence type="inferred from homology"/>
<evidence type="ECO:0000255" key="1">
    <source>
        <dbReference type="HAMAP-Rule" id="MF_02075"/>
    </source>
</evidence>
<sequence length="438" mass="50132">MYLIADWRRTHYSKDVIPEMDGQEVTLMGWVHSIRALGKLAFVILRDRAGTIQAVVPKQKVDEETFEIAKKLGKEDIVAIKGKVVANEKAPKGFEVIPIEIRVLNKADAPLPLDPSEKVSAEIDTRLDKRFLDIRRPKIQAIFKIRSEMLKSIRKTFADEGFIEVNTPKLVASATEGGTELFPISYFEKEAFLGQSPQLYKQMMMAGGFDKVFEIAQIFRAEEHNTRRHLNEAISIDSEMSFVNEKDAMAMLEKVVYNCYSDIEYNRPNEIELLELNWEIPEKTFDKVTYTEAIDIAIAKGVEIEWGEDLSRAAERAVGDEMGGLYFITEWPTQTRPFYTLPHKHDNKVCKAFDLMYKELEISSGAQRVHKYDLLVQNISNMGLNPDSFETYLEAFKYGMPPHAGWGLGADRFAMVLTAQDNIRECVLFPRDRQRLTP</sequence>
<dbReference type="EC" id="6.1.1.23" evidence="1"/>
<dbReference type="EMBL" id="BX950229">
    <property type="protein sequence ID" value="CAF31172.1"/>
    <property type="molecule type" value="Genomic_DNA"/>
</dbReference>
<dbReference type="SMR" id="Q6LWU0"/>
<dbReference type="STRING" id="267377.MMP1616"/>
<dbReference type="EnsemblBacteria" id="CAF31172">
    <property type="protein sequence ID" value="CAF31172"/>
    <property type="gene ID" value="MMP1616"/>
</dbReference>
<dbReference type="KEGG" id="mmp:MMP1616"/>
<dbReference type="PATRIC" id="fig|267377.15.peg.1655"/>
<dbReference type="eggNOG" id="arCOG00406">
    <property type="taxonomic scope" value="Archaea"/>
</dbReference>
<dbReference type="HOGENOM" id="CLU_004553_2_1_2"/>
<dbReference type="OrthoDB" id="5908at2157"/>
<dbReference type="Proteomes" id="UP000000590">
    <property type="component" value="Chromosome"/>
</dbReference>
<dbReference type="GO" id="GO:0017101">
    <property type="term" value="C:aminoacyl-tRNA synthetase multienzyme complex"/>
    <property type="evidence" value="ECO:0007669"/>
    <property type="project" value="TreeGrafter"/>
</dbReference>
<dbReference type="GO" id="GO:0005829">
    <property type="term" value="C:cytosol"/>
    <property type="evidence" value="ECO:0007669"/>
    <property type="project" value="TreeGrafter"/>
</dbReference>
<dbReference type="GO" id="GO:0004815">
    <property type="term" value="F:aspartate-tRNA ligase activity"/>
    <property type="evidence" value="ECO:0007669"/>
    <property type="project" value="UniProtKB-UniRule"/>
</dbReference>
<dbReference type="GO" id="GO:0050560">
    <property type="term" value="F:aspartate-tRNA(Asn) ligase activity"/>
    <property type="evidence" value="ECO:0007669"/>
    <property type="project" value="UniProtKB-EC"/>
</dbReference>
<dbReference type="GO" id="GO:0005524">
    <property type="term" value="F:ATP binding"/>
    <property type="evidence" value="ECO:0007669"/>
    <property type="project" value="UniProtKB-UniRule"/>
</dbReference>
<dbReference type="GO" id="GO:0000287">
    <property type="term" value="F:magnesium ion binding"/>
    <property type="evidence" value="ECO:0007669"/>
    <property type="project" value="UniProtKB-UniRule"/>
</dbReference>
<dbReference type="GO" id="GO:0003723">
    <property type="term" value="F:RNA binding"/>
    <property type="evidence" value="ECO:0007669"/>
    <property type="project" value="TreeGrafter"/>
</dbReference>
<dbReference type="GO" id="GO:0006422">
    <property type="term" value="P:aspartyl-tRNA aminoacylation"/>
    <property type="evidence" value="ECO:0007669"/>
    <property type="project" value="UniProtKB-UniRule"/>
</dbReference>
<dbReference type="CDD" id="cd00776">
    <property type="entry name" value="AsxRS_core"/>
    <property type="match status" value="1"/>
</dbReference>
<dbReference type="CDD" id="cd04316">
    <property type="entry name" value="ND_PkAspRS_like_N"/>
    <property type="match status" value="1"/>
</dbReference>
<dbReference type="FunFam" id="3.30.930.10:FF:000038">
    <property type="entry name" value="Aspartate--tRNA ligase"/>
    <property type="match status" value="1"/>
</dbReference>
<dbReference type="FunFam" id="2.40.50.140:FF:000324">
    <property type="entry name" value="Aspartate--tRNA(Asp/Asn) ligase"/>
    <property type="match status" value="1"/>
</dbReference>
<dbReference type="Gene3D" id="3.30.930.10">
    <property type="entry name" value="Bira Bifunctional Protein, Domain 2"/>
    <property type="match status" value="1"/>
</dbReference>
<dbReference type="Gene3D" id="2.40.50.140">
    <property type="entry name" value="Nucleic acid-binding proteins"/>
    <property type="match status" value="1"/>
</dbReference>
<dbReference type="HAMAP" id="MF_02075">
    <property type="entry name" value="Asp_tRNA_synth_type2"/>
    <property type="match status" value="1"/>
</dbReference>
<dbReference type="InterPro" id="IPR004364">
    <property type="entry name" value="Aa-tRNA-synt_II"/>
</dbReference>
<dbReference type="InterPro" id="IPR006195">
    <property type="entry name" value="aa-tRNA-synth_II"/>
</dbReference>
<dbReference type="InterPro" id="IPR045864">
    <property type="entry name" value="aa-tRNA-synth_II/BPL/LPL"/>
</dbReference>
<dbReference type="InterPro" id="IPR004523">
    <property type="entry name" value="Asp-tRNA_synthase_2"/>
</dbReference>
<dbReference type="InterPro" id="IPR002312">
    <property type="entry name" value="Asp/Asn-tRNA-synth_IIb"/>
</dbReference>
<dbReference type="InterPro" id="IPR012340">
    <property type="entry name" value="NA-bd_OB-fold"/>
</dbReference>
<dbReference type="InterPro" id="IPR004365">
    <property type="entry name" value="NA-bd_OB_tRNA"/>
</dbReference>
<dbReference type="NCBIfam" id="TIGR00458">
    <property type="entry name" value="aspS_nondisc"/>
    <property type="match status" value="1"/>
</dbReference>
<dbReference type="NCBIfam" id="NF003483">
    <property type="entry name" value="PRK05159.1"/>
    <property type="match status" value="1"/>
</dbReference>
<dbReference type="PANTHER" id="PTHR43450:SF1">
    <property type="entry name" value="ASPARTATE--TRNA LIGASE, CYTOPLASMIC"/>
    <property type="match status" value="1"/>
</dbReference>
<dbReference type="PANTHER" id="PTHR43450">
    <property type="entry name" value="ASPARTYL-TRNA SYNTHETASE"/>
    <property type="match status" value="1"/>
</dbReference>
<dbReference type="Pfam" id="PF00152">
    <property type="entry name" value="tRNA-synt_2"/>
    <property type="match status" value="1"/>
</dbReference>
<dbReference type="Pfam" id="PF01336">
    <property type="entry name" value="tRNA_anti-codon"/>
    <property type="match status" value="1"/>
</dbReference>
<dbReference type="PRINTS" id="PR01042">
    <property type="entry name" value="TRNASYNTHASP"/>
</dbReference>
<dbReference type="SUPFAM" id="SSF55681">
    <property type="entry name" value="Class II aaRS and biotin synthetases"/>
    <property type="match status" value="1"/>
</dbReference>
<dbReference type="SUPFAM" id="SSF50249">
    <property type="entry name" value="Nucleic acid-binding proteins"/>
    <property type="match status" value="1"/>
</dbReference>
<dbReference type="PROSITE" id="PS50862">
    <property type="entry name" value="AA_TRNA_LIGASE_II"/>
    <property type="match status" value="1"/>
</dbReference>
<organism>
    <name type="scientific">Methanococcus maripaludis (strain DSM 14266 / JCM 13030 / NBRC 101832 / S2 / LL)</name>
    <dbReference type="NCBI Taxonomy" id="267377"/>
    <lineage>
        <taxon>Archaea</taxon>
        <taxon>Methanobacteriati</taxon>
        <taxon>Methanobacteriota</taxon>
        <taxon>Methanomada group</taxon>
        <taxon>Methanococci</taxon>
        <taxon>Methanococcales</taxon>
        <taxon>Methanococcaceae</taxon>
        <taxon>Methanococcus</taxon>
    </lineage>
</organism>
<reference key="1">
    <citation type="journal article" date="2004" name="J. Bacteriol.">
        <title>Complete genome sequence of the genetically tractable hydrogenotrophic methanogen Methanococcus maripaludis.</title>
        <authorList>
            <person name="Hendrickson E.L."/>
            <person name="Kaul R."/>
            <person name="Zhou Y."/>
            <person name="Bovee D."/>
            <person name="Chapman P."/>
            <person name="Chung J."/>
            <person name="Conway de Macario E."/>
            <person name="Dodsworth J.A."/>
            <person name="Gillett W."/>
            <person name="Graham D.E."/>
            <person name="Hackett M."/>
            <person name="Haydock A.K."/>
            <person name="Kang A."/>
            <person name="Land M.L."/>
            <person name="Levy R."/>
            <person name="Lie T.J."/>
            <person name="Major T.A."/>
            <person name="Moore B.C."/>
            <person name="Porat I."/>
            <person name="Palmeiri A."/>
            <person name="Rouse G."/>
            <person name="Saenphimmachak C."/>
            <person name="Soell D."/>
            <person name="Van Dien S."/>
            <person name="Wang T."/>
            <person name="Whitman W.B."/>
            <person name="Xia Q."/>
            <person name="Zhang Y."/>
            <person name="Larimer F.W."/>
            <person name="Olson M.V."/>
            <person name="Leigh J.A."/>
        </authorList>
    </citation>
    <scope>NUCLEOTIDE SEQUENCE [LARGE SCALE GENOMIC DNA]</scope>
    <source>
        <strain>DSM 14266 / JCM 13030 / NBRC 101832 / S2 / LL</strain>
    </source>
</reference>
<comment type="function">
    <text evidence="1">Aspartyl-tRNA synthetase with relaxed tRNA specificity since it is able to aspartylate not only its cognate tRNA(Asp) but also tRNA(Asn). Reaction proceeds in two steps: L-aspartate is first activated by ATP to form Asp-AMP and then transferred to the acceptor end of tRNA(Asp/Asn).</text>
</comment>
<comment type="catalytic activity">
    <reaction evidence="1">
        <text>tRNA(Asx) + L-aspartate + ATP = L-aspartyl-tRNA(Asx) + AMP + diphosphate</text>
        <dbReference type="Rhea" id="RHEA:18349"/>
        <dbReference type="Rhea" id="RHEA-COMP:9710"/>
        <dbReference type="Rhea" id="RHEA-COMP:9711"/>
        <dbReference type="ChEBI" id="CHEBI:29991"/>
        <dbReference type="ChEBI" id="CHEBI:30616"/>
        <dbReference type="ChEBI" id="CHEBI:33019"/>
        <dbReference type="ChEBI" id="CHEBI:78442"/>
        <dbReference type="ChEBI" id="CHEBI:78516"/>
        <dbReference type="ChEBI" id="CHEBI:456215"/>
        <dbReference type="EC" id="6.1.1.23"/>
    </reaction>
</comment>
<comment type="cofactor">
    <cofactor evidence="1">
        <name>Mg(2+)</name>
        <dbReference type="ChEBI" id="CHEBI:18420"/>
    </cofactor>
    <text evidence="1">Binds 3 Mg(2+) cations per subunit. The strongest magnesium site (Mg1) is bound to the beta- and gamma-phosphates of ATP and four water molecules complete its coordination sphere.</text>
</comment>
<comment type="subunit">
    <text evidence="1">Homodimer.</text>
</comment>
<comment type="subcellular location">
    <subcellularLocation>
        <location evidence="1">Cytoplasm</location>
    </subcellularLocation>
</comment>
<comment type="similarity">
    <text evidence="1">Belongs to the class-II aminoacyl-tRNA synthetase family. Type 2 subfamily.</text>
</comment>
<gene>
    <name evidence="1" type="primary">aspS</name>
    <name type="ordered locus">MMP1616</name>
</gene>
<name>SYDND_METMP</name>